<accession>B4F0W4</accession>
<gene>
    <name evidence="1" type="primary">pyrE</name>
    <name type="ordered locus">PMI3152</name>
</gene>
<comment type="function">
    <text evidence="1">Catalyzes the transfer of a ribosyl phosphate group from 5-phosphoribose 1-diphosphate to orotate, leading to the formation of orotidine monophosphate (OMP).</text>
</comment>
<comment type="catalytic activity">
    <reaction evidence="1">
        <text>orotidine 5'-phosphate + diphosphate = orotate + 5-phospho-alpha-D-ribose 1-diphosphate</text>
        <dbReference type="Rhea" id="RHEA:10380"/>
        <dbReference type="ChEBI" id="CHEBI:30839"/>
        <dbReference type="ChEBI" id="CHEBI:33019"/>
        <dbReference type="ChEBI" id="CHEBI:57538"/>
        <dbReference type="ChEBI" id="CHEBI:58017"/>
        <dbReference type="EC" id="2.4.2.10"/>
    </reaction>
</comment>
<comment type="cofactor">
    <cofactor evidence="1">
        <name>Mg(2+)</name>
        <dbReference type="ChEBI" id="CHEBI:18420"/>
    </cofactor>
</comment>
<comment type="pathway">
    <text evidence="1">Pyrimidine metabolism; UMP biosynthesis via de novo pathway; UMP from orotate: step 1/2.</text>
</comment>
<comment type="subunit">
    <text evidence="1">Homodimer.</text>
</comment>
<comment type="similarity">
    <text evidence="1">Belongs to the purine/pyrimidine phosphoribosyltransferase family. PyrE subfamily.</text>
</comment>
<keyword id="KW-0328">Glycosyltransferase</keyword>
<keyword id="KW-0460">Magnesium</keyword>
<keyword id="KW-0665">Pyrimidine biosynthesis</keyword>
<keyword id="KW-1185">Reference proteome</keyword>
<keyword id="KW-0808">Transferase</keyword>
<protein>
    <recommendedName>
        <fullName evidence="1">Orotate phosphoribosyltransferase</fullName>
        <shortName evidence="1">OPRT</shortName>
        <shortName evidence="1">OPRTase</shortName>
        <ecNumber evidence="1">2.4.2.10</ecNumber>
    </recommendedName>
</protein>
<dbReference type="EC" id="2.4.2.10" evidence="1"/>
<dbReference type="EMBL" id="AM942759">
    <property type="protein sequence ID" value="CAR46195.1"/>
    <property type="molecule type" value="Genomic_DNA"/>
</dbReference>
<dbReference type="RefSeq" id="WP_004246493.1">
    <property type="nucleotide sequence ID" value="NC_010554.1"/>
</dbReference>
<dbReference type="SMR" id="B4F0W4"/>
<dbReference type="EnsemblBacteria" id="CAR46195">
    <property type="protein sequence ID" value="CAR46195"/>
    <property type="gene ID" value="PMI3152"/>
</dbReference>
<dbReference type="GeneID" id="6801001"/>
<dbReference type="KEGG" id="pmr:PMI3152"/>
<dbReference type="eggNOG" id="COG0461">
    <property type="taxonomic scope" value="Bacteria"/>
</dbReference>
<dbReference type="HOGENOM" id="CLU_074878_0_1_6"/>
<dbReference type="UniPathway" id="UPA00070">
    <property type="reaction ID" value="UER00119"/>
</dbReference>
<dbReference type="Proteomes" id="UP000008319">
    <property type="component" value="Chromosome"/>
</dbReference>
<dbReference type="GO" id="GO:0005737">
    <property type="term" value="C:cytoplasm"/>
    <property type="evidence" value="ECO:0007669"/>
    <property type="project" value="TreeGrafter"/>
</dbReference>
<dbReference type="GO" id="GO:0000287">
    <property type="term" value="F:magnesium ion binding"/>
    <property type="evidence" value="ECO:0007669"/>
    <property type="project" value="UniProtKB-UniRule"/>
</dbReference>
<dbReference type="GO" id="GO:0004588">
    <property type="term" value="F:orotate phosphoribosyltransferase activity"/>
    <property type="evidence" value="ECO:0007669"/>
    <property type="project" value="UniProtKB-UniRule"/>
</dbReference>
<dbReference type="GO" id="GO:0006207">
    <property type="term" value="P:'de novo' pyrimidine nucleobase biosynthetic process"/>
    <property type="evidence" value="ECO:0007669"/>
    <property type="project" value="TreeGrafter"/>
</dbReference>
<dbReference type="GO" id="GO:0044205">
    <property type="term" value="P:'de novo' UMP biosynthetic process"/>
    <property type="evidence" value="ECO:0007669"/>
    <property type="project" value="UniProtKB-UniRule"/>
</dbReference>
<dbReference type="GO" id="GO:0046132">
    <property type="term" value="P:pyrimidine ribonucleoside biosynthetic process"/>
    <property type="evidence" value="ECO:0007669"/>
    <property type="project" value="TreeGrafter"/>
</dbReference>
<dbReference type="CDD" id="cd06223">
    <property type="entry name" value="PRTases_typeI"/>
    <property type="match status" value="1"/>
</dbReference>
<dbReference type="FunFam" id="3.40.50.2020:FF:000008">
    <property type="entry name" value="Orotate phosphoribosyltransferase"/>
    <property type="match status" value="1"/>
</dbReference>
<dbReference type="Gene3D" id="3.40.50.2020">
    <property type="match status" value="1"/>
</dbReference>
<dbReference type="HAMAP" id="MF_01208">
    <property type="entry name" value="PyrE"/>
    <property type="match status" value="1"/>
</dbReference>
<dbReference type="InterPro" id="IPR023031">
    <property type="entry name" value="OPRT"/>
</dbReference>
<dbReference type="InterPro" id="IPR004467">
    <property type="entry name" value="Or_phspho_trans_dom"/>
</dbReference>
<dbReference type="InterPro" id="IPR000836">
    <property type="entry name" value="PRibTrfase_dom"/>
</dbReference>
<dbReference type="InterPro" id="IPR029057">
    <property type="entry name" value="PRTase-like"/>
</dbReference>
<dbReference type="NCBIfam" id="TIGR00336">
    <property type="entry name" value="pyrE"/>
    <property type="match status" value="1"/>
</dbReference>
<dbReference type="PANTHER" id="PTHR46683">
    <property type="entry name" value="OROTATE PHOSPHORIBOSYLTRANSFERASE 1-RELATED"/>
    <property type="match status" value="1"/>
</dbReference>
<dbReference type="PANTHER" id="PTHR46683:SF1">
    <property type="entry name" value="OROTATE PHOSPHORIBOSYLTRANSFERASE 1-RELATED"/>
    <property type="match status" value="1"/>
</dbReference>
<dbReference type="Pfam" id="PF00156">
    <property type="entry name" value="Pribosyltran"/>
    <property type="match status" value="1"/>
</dbReference>
<dbReference type="SUPFAM" id="SSF53271">
    <property type="entry name" value="PRTase-like"/>
    <property type="match status" value="1"/>
</dbReference>
<dbReference type="PROSITE" id="PS00103">
    <property type="entry name" value="PUR_PYR_PR_TRANSFER"/>
    <property type="match status" value="1"/>
</dbReference>
<evidence type="ECO:0000255" key="1">
    <source>
        <dbReference type="HAMAP-Rule" id="MF_01208"/>
    </source>
</evidence>
<feature type="chain" id="PRO_1000138816" description="Orotate phosphoribosyltransferase">
    <location>
        <begin position="1"/>
        <end position="214"/>
    </location>
</feature>
<feature type="binding site" description="in other chain" evidence="1">
    <location>
        <position position="26"/>
    </location>
    <ligand>
        <name>5-phospho-alpha-D-ribose 1-diphosphate</name>
        <dbReference type="ChEBI" id="CHEBI:58017"/>
        <note>ligand shared between dimeric partners</note>
    </ligand>
</feature>
<feature type="binding site" evidence="1">
    <location>
        <begin position="34"/>
        <end position="35"/>
    </location>
    <ligand>
        <name>orotate</name>
        <dbReference type="ChEBI" id="CHEBI:30839"/>
    </ligand>
</feature>
<feature type="binding site" description="in other chain" evidence="1">
    <location>
        <begin position="72"/>
        <end position="73"/>
    </location>
    <ligand>
        <name>5-phospho-alpha-D-ribose 1-diphosphate</name>
        <dbReference type="ChEBI" id="CHEBI:58017"/>
        <note>ligand shared between dimeric partners</note>
    </ligand>
</feature>
<feature type="binding site" evidence="1">
    <location>
        <position position="99"/>
    </location>
    <ligand>
        <name>5-phospho-alpha-D-ribose 1-diphosphate</name>
        <dbReference type="ChEBI" id="CHEBI:58017"/>
        <note>ligand shared between dimeric partners</note>
    </ligand>
</feature>
<feature type="binding site" description="in other chain" evidence="1">
    <location>
        <position position="100"/>
    </location>
    <ligand>
        <name>5-phospho-alpha-D-ribose 1-diphosphate</name>
        <dbReference type="ChEBI" id="CHEBI:58017"/>
        <note>ligand shared between dimeric partners</note>
    </ligand>
</feature>
<feature type="binding site" evidence="1">
    <location>
        <position position="103"/>
    </location>
    <ligand>
        <name>5-phospho-alpha-D-ribose 1-diphosphate</name>
        <dbReference type="ChEBI" id="CHEBI:58017"/>
        <note>ligand shared between dimeric partners</note>
    </ligand>
</feature>
<feature type="binding site" evidence="1">
    <location>
        <position position="105"/>
    </location>
    <ligand>
        <name>5-phospho-alpha-D-ribose 1-diphosphate</name>
        <dbReference type="ChEBI" id="CHEBI:58017"/>
        <note>ligand shared between dimeric partners</note>
    </ligand>
</feature>
<feature type="binding site" description="in other chain" evidence="1">
    <location>
        <begin position="124"/>
        <end position="132"/>
    </location>
    <ligand>
        <name>5-phospho-alpha-D-ribose 1-diphosphate</name>
        <dbReference type="ChEBI" id="CHEBI:58017"/>
        <note>ligand shared between dimeric partners</note>
    </ligand>
</feature>
<feature type="binding site" evidence="1">
    <location>
        <position position="128"/>
    </location>
    <ligand>
        <name>orotate</name>
        <dbReference type="ChEBI" id="CHEBI:30839"/>
    </ligand>
</feature>
<feature type="binding site" evidence="1">
    <location>
        <position position="156"/>
    </location>
    <ligand>
        <name>orotate</name>
        <dbReference type="ChEBI" id="CHEBI:30839"/>
    </ligand>
</feature>
<name>PYRE_PROMH</name>
<proteinExistence type="inferred from homology"/>
<organism>
    <name type="scientific">Proteus mirabilis (strain HI4320)</name>
    <dbReference type="NCBI Taxonomy" id="529507"/>
    <lineage>
        <taxon>Bacteria</taxon>
        <taxon>Pseudomonadati</taxon>
        <taxon>Pseudomonadota</taxon>
        <taxon>Gammaproteobacteria</taxon>
        <taxon>Enterobacterales</taxon>
        <taxon>Morganellaceae</taxon>
        <taxon>Proteus</taxon>
    </lineage>
</organism>
<sequence length="214" mass="23656">MKAYQRHFIELALAKNVLKFGEFTLKSGRVSPYFFNAGLFNTGRDLALLGQFYAQTLIDNHVPCDVLFGPAYKGIPIATTTAVALVEHHDMDVPYCFNRKEAKDHGEGGTLVGSPLTGNVVIVDDVITAGTAIRESMEIIKQHDATLSGVLLSLDRQEKGRGSLSAIQELERDYQCQVYSIITLDDLISYLTESETLSAHLPAVKAYRERYGIN</sequence>
<reference key="1">
    <citation type="journal article" date="2008" name="J. Bacteriol.">
        <title>Complete genome sequence of uropathogenic Proteus mirabilis, a master of both adherence and motility.</title>
        <authorList>
            <person name="Pearson M.M."/>
            <person name="Sebaihia M."/>
            <person name="Churcher C."/>
            <person name="Quail M.A."/>
            <person name="Seshasayee A.S."/>
            <person name="Luscombe N.M."/>
            <person name="Abdellah Z."/>
            <person name="Arrosmith C."/>
            <person name="Atkin B."/>
            <person name="Chillingworth T."/>
            <person name="Hauser H."/>
            <person name="Jagels K."/>
            <person name="Moule S."/>
            <person name="Mungall K."/>
            <person name="Norbertczak H."/>
            <person name="Rabbinowitsch E."/>
            <person name="Walker D."/>
            <person name="Whithead S."/>
            <person name="Thomson N.R."/>
            <person name="Rather P.N."/>
            <person name="Parkhill J."/>
            <person name="Mobley H.L.T."/>
        </authorList>
    </citation>
    <scope>NUCLEOTIDE SEQUENCE [LARGE SCALE GENOMIC DNA]</scope>
    <source>
        <strain>HI4320</strain>
    </source>
</reference>